<accession>A8AAI6</accession>
<evidence type="ECO:0000255" key="1">
    <source>
        <dbReference type="HAMAP-Rule" id="MF_00239"/>
    </source>
</evidence>
<dbReference type="EC" id="2.7.4.25" evidence="1"/>
<dbReference type="EMBL" id="CP000816">
    <property type="protein sequence ID" value="ABU81938.1"/>
    <property type="molecule type" value="Genomic_DNA"/>
</dbReference>
<dbReference type="RefSeq" id="WP_012122902.1">
    <property type="nucleotide sequence ID" value="NC_009776.1"/>
</dbReference>
<dbReference type="SMR" id="A8AAI6"/>
<dbReference type="STRING" id="453591.Igni_0756"/>
<dbReference type="GeneID" id="5561748"/>
<dbReference type="KEGG" id="iho:Igni_0756"/>
<dbReference type="eggNOG" id="arCOG01037">
    <property type="taxonomic scope" value="Archaea"/>
</dbReference>
<dbReference type="HOGENOM" id="CLU_079959_1_0_2"/>
<dbReference type="OrthoDB" id="31096at2157"/>
<dbReference type="PhylomeDB" id="A8AAI6"/>
<dbReference type="Proteomes" id="UP000000262">
    <property type="component" value="Chromosome"/>
</dbReference>
<dbReference type="GO" id="GO:0005737">
    <property type="term" value="C:cytoplasm"/>
    <property type="evidence" value="ECO:0007669"/>
    <property type="project" value="UniProtKB-SubCell"/>
</dbReference>
<dbReference type="GO" id="GO:0005524">
    <property type="term" value="F:ATP binding"/>
    <property type="evidence" value="ECO:0007669"/>
    <property type="project" value="UniProtKB-UniRule"/>
</dbReference>
<dbReference type="GO" id="GO:0036430">
    <property type="term" value="F:CMP kinase activity"/>
    <property type="evidence" value="ECO:0007669"/>
    <property type="project" value="RHEA"/>
</dbReference>
<dbReference type="GO" id="GO:0036431">
    <property type="term" value="F:dCMP kinase activity"/>
    <property type="evidence" value="ECO:0007669"/>
    <property type="project" value="RHEA"/>
</dbReference>
<dbReference type="GO" id="GO:0006220">
    <property type="term" value="P:pyrimidine nucleotide metabolic process"/>
    <property type="evidence" value="ECO:0007669"/>
    <property type="project" value="UniProtKB-UniRule"/>
</dbReference>
<dbReference type="CDD" id="cd02020">
    <property type="entry name" value="CMPK"/>
    <property type="match status" value="1"/>
</dbReference>
<dbReference type="Gene3D" id="3.40.50.300">
    <property type="entry name" value="P-loop containing nucleotide triphosphate hydrolases"/>
    <property type="match status" value="1"/>
</dbReference>
<dbReference type="HAMAP" id="MF_00239">
    <property type="entry name" value="Cytidyl_kinase_type2"/>
    <property type="match status" value="1"/>
</dbReference>
<dbReference type="InterPro" id="IPR011892">
    <property type="entry name" value="Cyt_kin_arch"/>
</dbReference>
<dbReference type="InterPro" id="IPR011994">
    <property type="entry name" value="Cytidylate_kinase_dom"/>
</dbReference>
<dbReference type="InterPro" id="IPR027417">
    <property type="entry name" value="P-loop_NTPase"/>
</dbReference>
<dbReference type="NCBIfam" id="TIGR02173">
    <property type="entry name" value="cyt_kin_arch"/>
    <property type="match status" value="1"/>
</dbReference>
<dbReference type="Pfam" id="PF13189">
    <property type="entry name" value="Cytidylate_kin2"/>
    <property type="match status" value="1"/>
</dbReference>
<dbReference type="PRINTS" id="PR01100">
    <property type="entry name" value="SHIKIMTKNASE"/>
</dbReference>
<dbReference type="SUPFAM" id="SSF52540">
    <property type="entry name" value="P-loop containing nucleoside triphosphate hydrolases"/>
    <property type="match status" value="1"/>
</dbReference>
<keyword id="KW-0067">ATP-binding</keyword>
<keyword id="KW-0963">Cytoplasm</keyword>
<keyword id="KW-0418">Kinase</keyword>
<keyword id="KW-0547">Nucleotide-binding</keyword>
<keyword id="KW-1185">Reference proteome</keyword>
<keyword id="KW-0808">Transferase</keyword>
<comment type="catalytic activity">
    <reaction evidence="1">
        <text>CMP + ATP = CDP + ADP</text>
        <dbReference type="Rhea" id="RHEA:11600"/>
        <dbReference type="ChEBI" id="CHEBI:30616"/>
        <dbReference type="ChEBI" id="CHEBI:58069"/>
        <dbReference type="ChEBI" id="CHEBI:60377"/>
        <dbReference type="ChEBI" id="CHEBI:456216"/>
        <dbReference type="EC" id="2.7.4.25"/>
    </reaction>
</comment>
<comment type="catalytic activity">
    <reaction evidence="1">
        <text>dCMP + ATP = dCDP + ADP</text>
        <dbReference type="Rhea" id="RHEA:25094"/>
        <dbReference type="ChEBI" id="CHEBI:30616"/>
        <dbReference type="ChEBI" id="CHEBI:57566"/>
        <dbReference type="ChEBI" id="CHEBI:58593"/>
        <dbReference type="ChEBI" id="CHEBI:456216"/>
        <dbReference type="EC" id="2.7.4.25"/>
    </reaction>
</comment>
<comment type="subcellular location">
    <subcellularLocation>
        <location evidence="1">Cytoplasm</location>
    </subcellularLocation>
</comment>
<comment type="similarity">
    <text evidence="1">Belongs to the cytidylate kinase family. Type 2 subfamily.</text>
</comment>
<gene>
    <name evidence="1" type="primary">cmk</name>
    <name type="ordered locus">Igni_0756</name>
</gene>
<feature type="chain" id="PRO_1000005668" description="Cytidylate kinase">
    <location>
        <begin position="1"/>
        <end position="172"/>
    </location>
</feature>
<feature type="binding site" evidence="1">
    <location>
        <begin position="8"/>
        <end position="16"/>
    </location>
    <ligand>
        <name>ATP</name>
        <dbReference type="ChEBI" id="CHEBI:30616"/>
    </ligand>
</feature>
<name>KCY_IGNH4</name>
<reference key="1">
    <citation type="journal article" date="2008" name="Genome Biol.">
        <title>A genomic analysis of the archaeal system Ignicoccus hospitalis-Nanoarchaeum equitans.</title>
        <authorList>
            <person name="Podar M."/>
            <person name="Anderson I."/>
            <person name="Makarova K.S."/>
            <person name="Elkins J.G."/>
            <person name="Ivanova N."/>
            <person name="Wall M.A."/>
            <person name="Lykidis A."/>
            <person name="Mavromatis K."/>
            <person name="Sun H."/>
            <person name="Hudson M.E."/>
            <person name="Chen W."/>
            <person name="Deciu C."/>
            <person name="Hutchison D."/>
            <person name="Eads J.R."/>
            <person name="Anderson A."/>
            <person name="Fernandes F."/>
            <person name="Szeto E."/>
            <person name="Lapidus A."/>
            <person name="Kyrpides N.C."/>
            <person name="Saier M.H. Jr."/>
            <person name="Richardson P.M."/>
            <person name="Rachel R."/>
            <person name="Huber H."/>
            <person name="Eisen J.A."/>
            <person name="Koonin E.V."/>
            <person name="Keller M."/>
            <person name="Stetter K.O."/>
        </authorList>
    </citation>
    <scope>NUCLEOTIDE SEQUENCE [LARGE SCALE GENOMIC DNA]</scope>
    <source>
        <strain>KIN4/I / DSM 18386 / JCM 14125</strain>
    </source>
</reference>
<protein>
    <recommendedName>
        <fullName evidence="1">Cytidylate kinase</fullName>
        <shortName evidence="1">CK</shortName>
        <ecNumber evidence="1">2.7.4.25</ecNumber>
    </recommendedName>
    <alternativeName>
        <fullName evidence="1">Cytidine monophosphate kinase</fullName>
        <shortName evidence="1">CMP kinase</shortName>
    </alternativeName>
</protein>
<organism>
    <name type="scientific">Ignicoccus hospitalis (strain KIN4/I / DSM 18386 / JCM 14125)</name>
    <dbReference type="NCBI Taxonomy" id="453591"/>
    <lineage>
        <taxon>Archaea</taxon>
        <taxon>Thermoproteota</taxon>
        <taxon>Thermoprotei</taxon>
        <taxon>Desulfurococcales</taxon>
        <taxon>Desulfurococcaceae</taxon>
        <taxon>Ignicoccus</taxon>
    </lineage>
</organism>
<proteinExistence type="inferred from homology"/>
<sequence length="172" mass="19113">MTVVVISGPPGSGKSTVAKKLASELGLRFVSAGSVFRKLAEEIGVSLLELNEMALKDPEIDLRIDRMVLEEARRGNVVIEAHLGGWVAAPYADVNVYLTAPLEERAKRIARRDGISYEEALEEILSREEVQWIRFRKLYGFDVASLEIFDLVVNTALMGPEAVVETIKRMLL</sequence>